<gene>
    <name evidence="1" type="primary">rplU</name>
    <name type="ordered locus">RSKD131_3145</name>
</gene>
<evidence type="ECO:0000255" key="1">
    <source>
        <dbReference type="HAMAP-Rule" id="MF_01363"/>
    </source>
</evidence>
<evidence type="ECO:0000305" key="2"/>
<reference key="1">
    <citation type="journal article" date="2009" name="J. Bacteriol.">
        <title>Complete genome sequence of Rhodobacter sphaeroides KD131.</title>
        <authorList>
            <person name="Lim S.-K."/>
            <person name="Kim S.J."/>
            <person name="Cha S.H."/>
            <person name="Oh Y.-K."/>
            <person name="Rhee H.-J."/>
            <person name="Kim M.-S."/>
            <person name="Lee J.K."/>
        </authorList>
    </citation>
    <scope>NUCLEOTIDE SEQUENCE [LARGE SCALE GENOMIC DNA]</scope>
    <source>
        <strain>KD131 / KCTC 12085</strain>
    </source>
</reference>
<comment type="function">
    <text evidence="1">This protein binds to 23S rRNA in the presence of protein L20.</text>
</comment>
<comment type="subunit">
    <text evidence="1">Part of the 50S ribosomal subunit. Contacts protein L20.</text>
</comment>
<comment type="similarity">
    <text evidence="1">Belongs to the bacterial ribosomal protein bL21 family.</text>
</comment>
<keyword id="KW-0687">Ribonucleoprotein</keyword>
<keyword id="KW-0689">Ribosomal protein</keyword>
<keyword id="KW-0694">RNA-binding</keyword>
<keyword id="KW-0699">rRNA-binding</keyword>
<name>RL21_CERSK</name>
<dbReference type="EMBL" id="CP001151">
    <property type="protein sequence ID" value="ACM03005.1"/>
    <property type="molecule type" value="Genomic_DNA"/>
</dbReference>
<dbReference type="RefSeq" id="WP_002723380.1">
    <property type="nucleotide sequence ID" value="NC_011958.1"/>
</dbReference>
<dbReference type="SMR" id="B9KW01"/>
<dbReference type="GeneID" id="67448500"/>
<dbReference type="KEGG" id="rsk:RSKD131_3145"/>
<dbReference type="HOGENOM" id="CLU_061463_1_2_5"/>
<dbReference type="GO" id="GO:0005737">
    <property type="term" value="C:cytoplasm"/>
    <property type="evidence" value="ECO:0007669"/>
    <property type="project" value="UniProtKB-ARBA"/>
</dbReference>
<dbReference type="GO" id="GO:1990904">
    <property type="term" value="C:ribonucleoprotein complex"/>
    <property type="evidence" value="ECO:0007669"/>
    <property type="project" value="UniProtKB-KW"/>
</dbReference>
<dbReference type="GO" id="GO:0005840">
    <property type="term" value="C:ribosome"/>
    <property type="evidence" value="ECO:0007669"/>
    <property type="project" value="UniProtKB-KW"/>
</dbReference>
<dbReference type="GO" id="GO:0019843">
    <property type="term" value="F:rRNA binding"/>
    <property type="evidence" value="ECO:0007669"/>
    <property type="project" value="UniProtKB-UniRule"/>
</dbReference>
<dbReference type="GO" id="GO:0003735">
    <property type="term" value="F:structural constituent of ribosome"/>
    <property type="evidence" value="ECO:0007669"/>
    <property type="project" value="InterPro"/>
</dbReference>
<dbReference type="GO" id="GO:0006412">
    <property type="term" value="P:translation"/>
    <property type="evidence" value="ECO:0007669"/>
    <property type="project" value="UniProtKB-UniRule"/>
</dbReference>
<dbReference type="HAMAP" id="MF_01363">
    <property type="entry name" value="Ribosomal_bL21"/>
    <property type="match status" value="1"/>
</dbReference>
<dbReference type="InterPro" id="IPR028909">
    <property type="entry name" value="bL21-like"/>
</dbReference>
<dbReference type="InterPro" id="IPR036164">
    <property type="entry name" value="bL21-like_sf"/>
</dbReference>
<dbReference type="InterPro" id="IPR001787">
    <property type="entry name" value="Ribosomal_bL21"/>
</dbReference>
<dbReference type="NCBIfam" id="TIGR00061">
    <property type="entry name" value="L21"/>
    <property type="match status" value="1"/>
</dbReference>
<dbReference type="PANTHER" id="PTHR21349">
    <property type="entry name" value="50S RIBOSOMAL PROTEIN L21"/>
    <property type="match status" value="1"/>
</dbReference>
<dbReference type="PANTHER" id="PTHR21349:SF0">
    <property type="entry name" value="LARGE RIBOSOMAL SUBUNIT PROTEIN BL21M"/>
    <property type="match status" value="1"/>
</dbReference>
<dbReference type="Pfam" id="PF00829">
    <property type="entry name" value="Ribosomal_L21p"/>
    <property type="match status" value="1"/>
</dbReference>
<dbReference type="SUPFAM" id="SSF141091">
    <property type="entry name" value="L21p-like"/>
    <property type="match status" value="1"/>
</dbReference>
<protein>
    <recommendedName>
        <fullName evidence="1">Large ribosomal subunit protein bL21</fullName>
    </recommendedName>
    <alternativeName>
        <fullName evidence="2">50S ribosomal protein L21</fullName>
    </alternativeName>
</protein>
<organism>
    <name type="scientific">Cereibacter sphaeroides (strain KD131 / KCTC 12085)</name>
    <name type="common">Rhodobacter sphaeroides</name>
    <dbReference type="NCBI Taxonomy" id="557760"/>
    <lineage>
        <taxon>Bacteria</taxon>
        <taxon>Pseudomonadati</taxon>
        <taxon>Pseudomonadota</taxon>
        <taxon>Alphaproteobacteria</taxon>
        <taxon>Rhodobacterales</taxon>
        <taxon>Paracoccaceae</taxon>
        <taxon>Cereibacter</taxon>
    </lineage>
</organism>
<feature type="chain" id="PRO_1000166738" description="Large ribosomal subunit protein bL21">
    <location>
        <begin position="1"/>
        <end position="131"/>
    </location>
</feature>
<sequence>MFAVLKTGGKQYKVQAGDVLRVEKLACEAGDKIQFNDILMVGGDSVTVGAPFVAGAAVQAEVIAQIKGEKTIHYVKRRRKHSSQRTKGHRQQLTLLRVTDVLASGADASGVAVATGTADARRAAHNASAKE</sequence>
<proteinExistence type="inferred from homology"/>
<accession>B9KW01</accession>